<evidence type="ECO:0000255" key="1">
    <source>
        <dbReference type="HAMAP-Rule" id="MF_00186"/>
    </source>
</evidence>
<accession>B2V358</accession>
<proteinExistence type="inferred from homology"/>
<keyword id="KW-0067">ATP-binding</keyword>
<keyword id="KW-0319">Glycerol metabolism</keyword>
<keyword id="KW-0418">Kinase</keyword>
<keyword id="KW-0547">Nucleotide-binding</keyword>
<keyword id="KW-0808">Transferase</keyword>
<organism>
    <name type="scientific">Clostridium botulinum (strain Alaska E43 / Type E3)</name>
    <dbReference type="NCBI Taxonomy" id="508767"/>
    <lineage>
        <taxon>Bacteria</taxon>
        <taxon>Bacillati</taxon>
        <taxon>Bacillota</taxon>
        <taxon>Clostridia</taxon>
        <taxon>Eubacteriales</taxon>
        <taxon>Clostridiaceae</taxon>
        <taxon>Clostridium</taxon>
    </lineage>
</organism>
<sequence>MGKYVVALDQGTTSSRAIIFDKEQNIVGVSQKEFTQIYPHEGWVEHNPLEIWSSQYGVLQEVLAKTNITADEISAIGITNQRETTIVWDKNTGEPVYNAIVWQCRRTAGIVDELKKDDEFAEYVKANTGLLLDAYFSGTKIKWILDNVEGAREKAEKGDLLFGTVDTWLVWKLTNGKVHVTDYTNASRTMLYNIKELRWDEKIINKLGIPTSMLPEVKNSSEVYGHTNLGGVGGVRVPISGMAGDQQCALFGQTCFEKGSAKNTYGTGCFLLMNTGEDMVLSKNGLVTTIAVGINDKIEYALEGSVFVGGAVIQWIRDELQFIHDAADSEYFAKKVEDNGGVYVVPAFVGLGAPYWDMYARGAIFGLTRGANRNHIIRAALESIAYQTNDLLTAMAEDAGCKLASLRVDGGASRNDLLMQFQADISNTQVLRPIITETTALGAAYLAGLAVGFWESKEEIATKWAVSKSYGPTFESAKREKLNKGWKNAVSRVKGWAE</sequence>
<name>GLPK_CLOBA</name>
<dbReference type="EC" id="2.7.1.30" evidence="1"/>
<dbReference type="EMBL" id="CP001078">
    <property type="protein sequence ID" value="ACD53539.1"/>
    <property type="molecule type" value="Genomic_DNA"/>
</dbReference>
<dbReference type="RefSeq" id="WP_003373509.1">
    <property type="nucleotide sequence ID" value="NC_010723.1"/>
</dbReference>
<dbReference type="SMR" id="B2V358"/>
<dbReference type="KEGG" id="cbt:CLH_0977"/>
<dbReference type="HOGENOM" id="CLU_009281_2_3_9"/>
<dbReference type="UniPathway" id="UPA00618">
    <property type="reaction ID" value="UER00672"/>
</dbReference>
<dbReference type="GO" id="GO:0005829">
    <property type="term" value="C:cytosol"/>
    <property type="evidence" value="ECO:0007669"/>
    <property type="project" value="TreeGrafter"/>
</dbReference>
<dbReference type="GO" id="GO:0005524">
    <property type="term" value="F:ATP binding"/>
    <property type="evidence" value="ECO:0007669"/>
    <property type="project" value="UniProtKB-UniRule"/>
</dbReference>
<dbReference type="GO" id="GO:0004370">
    <property type="term" value="F:glycerol kinase activity"/>
    <property type="evidence" value="ECO:0000250"/>
    <property type="project" value="UniProtKB"/>
</dbReference>
<dbReference type="GO" id="GO:0019563">
    <property type="term" value="P:glycerol catabolic process"/>
    <property type="evidence" value="ECO:0007669"/>
    <property type="project" value="UniProtKB-UniRule"/>
</dbReference>
<dbReference type="GO" id="GO:0006071">
    <property type="term" value="P:glycerol metabolic process"/>
    <property type="evidence" value="ECO:0000250"/>
    <property type="project" value="UniProtKB"/>
</dbReference>
<dbReference type="GO" id="GO:0006072">
    <property type="term" value="P:glycerol-3-phosphate metabolic process"/>
    <property type="evidence" value="ECO:0007669"/>
    <property type="project" value="InterPro"/>
</dbReference>
<dbReference type="CDD" id="cd07786">
    <property type="entry name" value="FGGY_EcGK_like"/>
    <property type="match status" value="1"/>
</dbReference>
<dbReference type="FunFam" id="3.30.420.40:FF:000007">
    <property type="entry name" value="Glycerol kinase"/>
    <property type="match status" value="1"/>
</dbReference>
<dbReference type="FunFam" id="3.30.420.40:FF:000008">
    <property type="entry name" value="Glycerol kinase"/>
    <property type="match status" value="1"/>
</dbReference>
<dbReference type="Gene3D" id="3.30.420.40">
    <property type="match status" value="2"/>
</dbReference>
<dbReference type="HAMAP" id="MF_00186">
    <property type="entry name" value="Glycerol_kin"/>
    <property type="match status" value="1"/>
</dbReference>
<dbReference type="InterPro" id="IPR043129">
    <property type="entry name" value="ATPase_NBD"/>
</dbReference>
<dbReference type="InterPro" id="IPR000577">
    <property type="entry name" value="Carb_kinase_FGGY"/>
</dbReference>
<dbReference type="InterPro" id="IPR018483">
    <property type="entry name" value="Carb_kinase_FGGY_CS"/>
</dbReference>
<dbReference type="InterPro" id="IPR018485">
    <property type="entry name" value="FGGY_C"/>
</dbReference>
<dbReference type="InterPro" id="IPR018484">
    <property type="entry name" value="FGGY_N"/>
</dbReference>
<dbReference type="InterPro" id="IPR005999">
    <property type="entry name" value="Glycerol_kin"/>
</dbReference>
<dbReference type="NCBIfam" id="TIGR01311">
    <property type="entry name" value="glycerol_kin"/>
    <property type="match status" value="1"/>
</dbReference>
<dbReference type="NCBIfam" id="NF000756">
    <property type="entry name" value="PRK00047.1"/>
    <property type="match status" value="1"/>
</dbReference>
<dbReference type="PANTHER" id="PTHR10196:SF69">
    <property type="entry name" value="GLYCEROL KINASE"/>
    <property type="match status" value="1"/>
</dbReference>
<dbReference type="PANTHER" id="PTHR10196">
    <property type="entry name" value="SUGAR KINASE"/>
    <property type="match status" value="1"/>
</dbReference>
<dbReference type="Pfam" id="PF02782">
    <property type="entry name" value="FGGY_C"/>
    <property type="match status" value="1"/>
</dbReference>
<dbReference type="Pfam" id="PF00370">
    <property type="entry name" value="FGGY_N"/>
    <property type="match status" value="1"/>
</dbReference>
<dbReference type="PIRSF" id="PIRSF000538">
    <property type="entry name" value="GlpK"/>
    <property type="match status" value="1"/>
</dbReference>
<dbReference type="SUPFAM" id="SSF53067">
    <property type="entry name" value="Actin-like ATPase domain"/>
    <property type="match status" value="2"/>
</dbReference>
<dbReference type="PROSITE" id="PS00933">
    <property type="entry name" value="FGGY_KINASES_1"/>
    <property type="match status" value="1"/>
</dbReference>
<dbReference type="PROSITE" id="PS00445">
    <property type="entry name" value="FGGY_KINASES_2"/>
    <property type="match status" value="1"/>
</dbReference>
<reference key="1">
    <citation type="submission" date="2008-05" db="EMBL/GenBank/DDBJ databases">
        <title>Complete genome sequence of Clostridium botulinum E3 str. Alaska E43.</title>
        <authorList>
            <person name="Brinkac L.M."/>
            <person name="Brown J.L."/>
            <person name="Bruce D."/>
            <person name="Detter C."/>
            <person name="Munk C."/>
            <person name="Smith L.A."/>
            <person name="Smith T.J."/>
            <person name="Sutton G."/>
            <person name="Brettin T.S."/>
        </authorList>
    </citation>
    <scope>NUCLEOTIDE SEQUENCE [LARGE SCALE GENOMIC DNA]</scope>
    <source>
        <strain>Alaska E43 / Type E3</strain>
    </source>
</reference>
<gene>
    <name evidence="1" type="primary">glpK</name>
    <name type="ordered locus">CLH_0977</name>
</gene>
<comment type="function">
    <text evidence="1">Key enzyme in the regulation of glycerol uptake and metabolism. Catalyzes the phosphorylation of glycerol to yield sn-glycerol 3-phosphate.</text>
</comment>
<comment type="catalytic activity">
    <reaction evidence="1">
        <text>glycerol + ATP = sn-glycerol 3-phosphate + ADP + H(+)</text>
        <dbReference type="Rhea" id="RHEA:21644"/>
        <dbReference type="ChEBI" id="CHEBI:15378"/>
        <dbReference type="ChEBI" id="CHEBI:17754"/>
        <dbReference type="ChEBI" id="CHEBI:30616"/>
        <dbReference type="ChEBI" id="CHEBI:57597"/>
        <dbReference type="ChEBI" id="CHEBI:456216"/>
        <dbReference type="EC" id="2.7.1.30"/>
    </reaction>
</comment>
<comment type="activity regulation">
    <text evidence="1">Activated by phosphorylation and inhibited by fructose 1,6-bisphosphate (FBP).</text>
</comment>
<comment type="pathway">
    <text evidence="1">Polyol metabolism; glycerol degradation via glycerol kinase pathway; sn-glycerol 3-phosphate from glycerol: step 1/1.</text>
</comment>
<comment type="subunit">
    <text evidence="1">Homotetramer and homodimer (in equilibrium).</text>
</comment>
<comment type="similarity">
    <text evidence="1">Belongs to the FGGY kinase family.</text>
</comment>
<feature type="chain" id="PRO_1000098724" description="Glycerol kinase">
    <location>
        <begin position="1"/>
        <end position="498"/>
    </location>
</feature>
<feature type="binding site" evidence="1">
    <location>
        <position position="12"/>
    </location>
    <ligand>
        <name>ADP</name>
        <dbReference type="ChEBI" id="CHEBI:456216"/>
    </ligand>
</feature>
<feature type="binding site" evidence="1">
    <location>
        <position position="12"/>
    </location>
    <ligand>
        <name>ATP</name>
        <dbReference type="ChEBI" id="CHEBI:30616"/>
    </ligand>
</feature>
<feature type="binding site" evidence="1">
    <location>
        <position position="12"/>
    </location>
    <ligand>
        <name>sn-glycerol 3-phosphate</name>
        <dbReference type="ChEBI" id="CHEBI:57597"/>
    </ligand>
</feature>
<feature type="binding site" evidence="1">
    <location>
        <position position="13"/>
    </location>
    <ligand>
        <name>ATP</name>
        <dbReference type="ChEBI" id="CHEBI:30616"/>
    </ligand>
</feature>
<feature type="binding site" evidence="1">
    <location>
        <position position="14"/>
    </location>
    <ligand>
        <name>ATP</name>
        <dbReference type="ChEBI" id="CHEBI:30616"/>
    </ligand>
</feature>
<feature type="binding site" evidence="1">
    <location>
        <position position="16"/>
    </location>
    <ligand>
        <name>ADP</name>
        <dbReference type="ChEBI" id="CHEBI:456216"/>
    </ligand>
</feature>
<feature type="binding site" evidence="1">
    <location>
        <position position="82"/>
    </location>
    <ligand>
        <name>glycerol</name>
        <dbReference type="ChEBI" id="CHEBI:17754"/>
    </ligand>
</feature>
<feature type="binding site" evidence="1">
    <location>
        <position position="82"/>
    </location>
    <ligand>
        <name>sn-glycerol 3-phosphate</name>
        <dbReference type="ChEBI" id="CHEBI:57597"/>
    </ligand>
</feature>
<feature type="binding site" evidence="1">
    <location>
        <position position="83"/>
    </location>
    <ligand>
        <name>glycerol</name>
        <dbReference type="ChEBI" id="CHEBI:17754"/>
    </ligand>
</feature>
<feature type="binding site" evidence="1">
    <location>
        <position position="83"/>
    </location>
    <ligand>
        <name>sn-glycerol 3-phosphate</name>
        <dbReference type="ChEBI" id="CHEBI:57597"/>
    </ligand>
</feature>
<feature type="binding site" evidence="1">
    <location>
        <position position="135"/>
    </location>
    <ligand>
        <name>glycerol</name>
        <dbReference type="ChEBI" id="CHEBI:17754"/>
    </ligand>
</feature>
<feature type="binding site" evidence="1">
    <location>
        <position position="135"/>
    </location>
    <ligand>
        <name>sn-glycerol 3-phosphate</name>
        <dbReference type="ChEBI" id="CHEBI:57597"/>
    </ligand>
</feature>
<feature type="binding site" evidence="1">
    <location>
        <position position="245"/>
    </location>
    <ligand>
        <name>glycerol</name>
        <dbReference type="ChEBI" id="CHEBI:17754"/>
    </ligand>
</feature>
<feature type="binding site" evidence="1">
    <location>
        <position position="245"/>
    </location>
    <ligand>
        <name>sn-glycerol 3-phosphate</name>
        <dbReference type="ChEBI" id="CHEBI:57597"/>
    </ligand>
</feature>
<feature type="binding site" evidence="1">
    <location>
        <position position="246"/>
    </location>
    <ligand>
        <name>glycerol</name>
        <dbReference type="ChEBI" id="CHEBI:17754"/>
    </ligand>
</feature>
<feature type="binding site" evidence="1">
    <location>
        <position position="267"/>
    </location>
    <ligand>
        <name>ADP</name>
        <dbReference type="ChEBI" id="CHEBI:456216"/>
    </ligand>
</feature>
<feature type="binding site" evidence="1">
    <location>
        <position position="267"/>
    </location>
    <ligand>
        <name>ATP</name>
        <dbReference type="ChEBI" id="CHEBI:30616"/>
    </ligand>
</feature>
<feature type="binding site" evidence="1">
    <location>
        <position position="310"/>
    </location>
    <ligand>
        <name>ADP</name>
        <dbReference type="ChEBI" id="CHEBI:456216"/>
    </ligand>
</feature>
<feature type="binding site" evidence="1">
    <location>
        <position position="310"/>
    </location>
    <ligand>
        <name>ATP</name>
        <dbReference type="ChEBI" id="CHEBI:30616"/>
    </ligand>
</feature>
<feature type="binding site" evidence="1">
    <location>
        <position position="314"/>
    </location>
    <ligand>
        <name>ATP</name>
        <dbReference type="ChEBI" id="CHEBI:30616"/>
    </ligand>
</feature>
<feature type="binding site" evidence="1">
    <location>
        <position position="411"/>
    </location>
    <ligand>
        <name>ADP</name>
        <dbReference type="ChEBI" id="CHEBI:456216"/>
    </ligand>
</feature>
<feature type="binding site" evidence="1">
    <location>
        <position position="411"/>
    </location>
    <ligand>
        <name>ATP</name>
        <dbReference type="ChEBI" id="CHEBI:30616"/>
    </ligand>
</feature>
<feature type="binding site" evidence="1">
    <location>
        <position position="415"/>
    </location>
    <ligand>
        <name>ADP</name>
        <dbReference type="ChEBI" id="CHEBI:456216"/>
    </ligand>
</feature>
<protein>
    <recommendedName>
        <fullName evidence="1">Glycerol kinase</fullName>
        <ecNumber evidence="1">2.7.1.30</ecNumber>
    </recommendedName>
    <alternativeName>
        <fullName evidence="1">ATP:glycerol 3-phosphotransferase</fullName>
    </alternativeName>
    <alternativeName>
        <fullName evidence="1">Glycerokinase</fullName>
        <shortName evidence="1">GK</shortName>
    </alternativeName>
</protein>